<sequence>IVTVDCSDYPKPVCTLDYMPLCGSDNKTYSNKCNFCNAVVDSNGTITLSHFGRC</sequence>
<protein>
    <recommendedName>
        <fullName>Ovomucoid</fullName>
    </recommendedName>
</protein>
<accession>P52244</accession>
<organism>
    <name type="scientific">Coloeus monedula</name>
    <name type="common">Eurasian jackdaw</name>
    <name type="synonym">Corvus monedula</name>
    <dbReference type="NCBI Taxonomy" id="30423"/>
    <lineage>
        <taxon>Eukaryota</taxon>
        <taxon>Metazoa</taxon>
        <taxon>Chordata</taxon>
        <taxon>Craniata</taxon>
        <taxon>Vertebrata</taxon>
        <taxon>Euteleostomi</taxon>
        <taxon>Archelosauria</taxon>
        <taxon>Archosauria</taxon>
        <taxon>Dinosauria</taxon>
        <taxon>Saurischia</taxon>
        <taxon>Theropoda</taxon>
        <taxon>Coelurosauria</taxon>
        <taxon>Aves</taxon>
        <taxon>Neognathae</taxon>
        <taxon>Neoaves</taxon>
        <taxon>Telluraves</taxon>
        <taxon>Australaves</taxon>
        <taxon>Passeriformes</taxon>
        <taxon>Corvoidea</taxon>
        <taxon>Corvidae</taxon>
        <taxon>Coloeus</taxon>
    </lineage>
</organism>
<name>IOVO_COLMD</name>
<feature type="chain" id="PRO_0000073090" description="Ovomucoid">
    <location>
        <begin position="1" status="less than"/>
        <end position="54" status="greater than"/>
    </location>
</feature>
<feature type="domain" description="Kazal-like" evidence="1">
    <location>
        <begin position="4"/>
        <end position="54"/>
    </location>
</feature>
<feature type="site" description="Reactive bond 3">
    <location>
        <begin position="16"/>
        <end position="17"/>
    </location>
</feature>
<feature type="glycosylation site" description="N-linked (GlcNAc...) asparagine">
    <location>
        <position position="43"/>
    </location>
</feature>
<feature type="disulfide bond">
    <location>
        <begin position="6"/>
        <end position="36"/>
    </location>
</feature>
<feature type="disulfide bond">
    <location>
        <begin position="14"/>
        <end position="33"/>
    </location>
</feature>
<feature type="disulfide bond">
    <location>
        <begin position="22"/>
        <end position="54"/>
    </location>
</feature>
<feature type="non-terminal residue">
    <location>
        <position position="1"/>
    </location>
</feature>
<feature type="non-terminal residue">
    <location>
        <position position="54"/>
    </location>
</feature>
<comment type="subcellular location">
    <subcellularLocation>
        <location>Secreted</location>
    </subcellularLocation>
</comment>
<comment type="domain">
    <text>Avian ovomucoid consists of three homologous, tandem Kazal family inhibitory domains.</text>
</comment>
<evidence type="ECO:0000255" key="1">
    <source>
        <dbReference type="PROSITE-ProRule" id="PRU00798"/>
    </source>
</evidence>
<keyword id="KW-0903">Direct protein sequencing</keyword>
<keyword id="KW-1015">Disulfide bond</keyword>
<keyword id="KW-0325">Glycoprotein</keyword>
<keyword id="KW-0646">Protease inhibitor</keyword>
<keyword id="KW-0677">Repeat</keyword>
<keyword id="KW-0964">Secreted</keyword>
<keyword id="KW-0722">Serine protease inhibitor</keyword>
<dbReference type="PIR" id="G61589">
    <property type="entry name" value="G61589"/>
</dbReference>
<dbReference type="SMR" id="P52244"/>
<dbReference type="GO" id="GO:0005576">
    <property type="term" value="C:extracellular region"/>
    <property type="evidence" value="ECO:0007669"/>
    <property type="project" value="UniProtKB-SubCell"/>
</dbReference>
<dbReference type="GO" id="GO:0004867">
    <property type="term" value="F:serine-type endopeptidase inhibitor activity"/>
    <property type="evidence" value="ECO:0007669"/>
    <property type="project" value="UniProtKB-KW"/>
</dbReference>
<dbReference type="CDD" id="cd00104">
    <property type="entry name" value="KAZAL_FS"/>
    <property type="match status" value="1"/>
</dbReference>
<dbReference type="FunFam" id="3.30.60.30:FF:000037">
    <property type="entry name" value="Ovomucoid"/>
    <property type="match status" value="1"/>
</dbReference>
<dbReference type="Gene3D" id="3.30.60.30">
    <property type="match status" value="1"/>
</dbReference>
<dbReference type="InterPro" id="IPR051597">
    <property type="entry name" value="Bifunctional_prot_inhibitor"/>
</dbReference>
<dbReference type="InterPro" id="IPR002350">
    <property type="entry name" value="Kazal_dom"/>
</dbReference>
<dbReference type="InterPro" id="IPR036058">
    <property type="entry name" value="Kazal_dom_sf"/>
</dbReference>
<dbReference type="InterPro" id="IPR001239">
    <property type="entry name" value="Prot_inh_Kazal-m"/>
</dbReference>
<dbReference type="PANTHER" id="PTHR47729:SF1">
    <property type="entry name" value="OVOMUCOID-LIKE-RELATED"/>
    <property type="match status" value="1"/>
</dbReference>
<dbReference type="PANTHER" id="PTHR47729">
    <property type="entry name" value="SERINE PEPTIDASE INHIBITOR, KAZAL TYPE 2, TANDEM DUPLICATE 1-RELATED"/>
    <property type="match status" value="1"/>
</dbReference>
<dbReference type="Pfam" id="PF00050">
    <property type="entry name" value="Kazal_1"/>
    <property type="match status" value="1"/>
</dbReference>
<dbReference type="PRINTS" id="PR00290">
    <property type="entry name" value="KAZALINHBTR"/>
</dbReference>
<dbReference type="SMART" id="SM00280">
    <property type="entry name" value="KAZAL"/>
    <property type="match status" value="1"/>
</dbReference>
<dbReference type="SUPFAM" id="SSF100895">
    <property type="entry name" value="Kazal-type serine protease inhibitors"/>
    <property type="match status" value="1"/>
</dbReference>
<dbReference type="PROSITE" id="PS00282">
    <property type="entry name" value="KAZAL_1"/>
    <property type="match status" value="1"/>
</dbReference>
<dbReference type="PROSITE" id="PS51465">
    <property type="entry name" value="KAZAL_2"/>
    <property type="match status" value="1"/>
</dbReference>
<reference key="1">
    <citation type="journal article" date="1993" name="J. Protein Chem.">
        <title>Amino acid sequences of ovomucoid third domains from 27 additional species of birds.</title>
        <authorList>
            <person name="Apostol I."/>
            <person name="Giletto A."/>
            <person name="Komiyama T."/>
            <person name="Zhang W."/>
            <person name="Laskowski M. Jr."/>
        </authorList>
    </citation>
    <scope>PROTEIN SEQUENCE</scope>
</reference>
<proteinExistence type="evidence at protein level"/>